<gene>
    <name evidence="1" type="primary">pyrR</name>
    <name type="ordered locus">BT9727_3633</name>
</gene>
<reference key="1">
    <citation type="journal article" date="2006" name="J. Bacteriol.">
        <title>Pathogenomic sequence analysis of Bacillus cereus and Bacillus thuringiensis isolates closely related to Bacillus anthracis.</title>
        <authorList>
            <person name="Han C.S."/>
            <person name="Xie G."/>
            <person name="Challacombe J.F."/>
            <person name="Altherr M.R."/>
            <person name="Bhotika S.S."/>
            <person name="Bruce D."/>
            <person name="Campbell C.S."/>
            <person name="Campbell M.L."/>
            <person name="Chen J."/>
            <person name="Chertkov O."/>
            <person name="Cleland C."/>
            <person name="Dimitrijevic M."/>
            <person name="Doggett N.A."/>
            <person name="Fawcett J.J."/>
            <person name="Glavina T."/>
            <person name="Goodwin L.A."/>
            <person name="Hill K.K."/>
            <person name="Hitchcock P."/>
            <person name="Jackson P.J."/>
            <person name="Keim P."/>
            <person name="Kewalramani A.R."/>
            <person name="Longmire J."/>
            <person name="Lucas S."/>
            <person name="Malfatti S."/>
            <person name="McMurry K."/>
            <person name="Meincke L.J."/>
            <person name="Misra M."/>
            <person name="Moseman B.L."/>
            <person name="Mundt M."/>
            <person name="Munk A.C."/>
            <person name="Okinaka R.T."/>
            <person name="Parson-Quintana B."/>
            <person name="Reilly L.P."/>
            <person name="Richardson P."/>
            <person name="Robinson D.L."/>
            <person name="Rubin E."/>
            <person name="Saunders E."/>
            <person name="Tapia R."/>
            <person name="Tesmer J.G."/>
            <person name="Thayer N."/>
            <person name="Thompson L.S."/>
            <person name="Tice H."/>
            <person name="Ticknor L.O."/>
            <person name="Wills P.L."/>
            <person name="Brettin T.S."/>
            <person name="Gilna P."/>
        </authorList>
    </citation>
    <scope>NUCLEOTIDE SEQUENCE [LARGE SCALE GENOMIC DNA]</scope>
    <source>
        <strain>97-27</strain>
    </source>
</reference>
<feature type="chain" id="PRO_1000053825" description="Bifunctional protein PyrR">
    <location>
        <begin position="1"/>
        <end position="180"/>
    </location>
</feature>
<feature type="short sequence motif" description="PRPP-binding" evidence="1">
    <location>
        <begin position="101"/>
        <end position="113"/>
    </location>
</feature>
<name>PYRR_BACHK</name>
<protein>
    <recommendedName>
        <fullName evidence="1">Bifunctional protein PyrR</fullName>
    </recommendedName>
    <domain>
        <recommendedName>
            <fullName evidence="1">Pyrimidine operon regulatory protein</fullName>
        </recommendedName>
    </domain>
    <domain>
        <recommendedName>
            <fullName evidence="1">Uracil phosphoribosyltransferase</fullName>
            <shortName evidence="1">UPRTase</shortName>
            <ecNumber evidence="1">2.4.2.9</ecNumber>
        </recommendedName>
    </domain>
</protein>
<evidence type="ECO:0000255" key="1">
    <source>
        <dbReference type="HAMAP-Rule" id="MF_01219"/>
    </source>
</evidence>
<comment type="function">
    <text evidence="1">Regulates transcriptional attenuation of the pyrimidine nucleotide (pyr) operon by binding in a uridine-dependent manner to specific sites on pyr mRNA. This disrupts an antiterminator hairpin in the RNA and favors formation of a downstream transcription terminator, leading to a reduced expression of downstream genes.</text>
</comment>
<comment type="function">
    <text evidence="1">Also displays a weak uracil phosphoribosyltransferase activity which is not physiologically significant.</text>
</comment>
<comment type="catalytic activity">
    <reaction evidence="1">
        <text>UMP + diphosphate = 5-phospho-alpha-D-ribose 1-diphosphate + uracil</text>
        <dbReference type="Rhea" id="RHEA:13017"/>
        <dbReference type="ChEBI" id="CHEBI:17568"/>
        <dbReference type="ChEBI" id="CHEBI:33019"/>
        <dbReference type="ChEBI" id="CHEBI:57865"/>
        <dbReference type="ChEBI" id="CHEBI:58017"/>
        <dbReference type="EC" id="2.4.2.9"/>
    </reaction>
</comment>
<comment type="subunit">
    <text evidence="1">Homodimer and homohexamer; in equilibrium.</text>
</comment>
<comment type="similarity">
    <text evidence="1">Belongs to the purine/pyrimidine phosphoribosyltransferase family. PyrR subfamily.</text>
</comment>
<keyword id="KW-0328">Glycosyltransferase</keyword>
<keyword id="KW-0694">RNA-binding</keyword>
<keyword id="KW-0804">Transcription</keyword>
<keyword id="KW-0805">Transcription regulation</keyword>
<keyword id="KW-0806">Transcription termination</keyword>
<keyword id="KW-0808">Transferase</keyword>
<sequence>MQEKAVVLDDQMIRRALTRISHEIVERNKGVDNCVLVGIKTRGIFIAQRLAERIGQIEGKEIEVGELDITLYRDDLTLQSKNKEPLVKGSDIPVDITKKKVILVDDVLYTGRTVRAAMDALMDLGRPSQIQLAVLVDRGHRELPIRADYVGKNIPTSSEERIEVDLQETDQQDRVSIYDK</sequence>
<dbReference type="EC" id="2.4.2.9" evidence="1"/>
<dbReference type="EMBL" id="AE017355">
    <property type="protein sequence ID" value="AAT61599.1"/>
    <property type="molecule type" value="Genomic_DNA"/>
</dbReference>
<dbReference type="RefSeq" id="WP_001156487.1">
    <property type="nucleotide sequence ID" value="NC_005957.1"/>
</dbReference>
<dbReference type="RefSeq" id="YP_037953.1">
    <property type="nucleotide sequence ID" value="NC_005957.1"/>
</dbReference>
<dbReference type="SMR" id="Q6HES3"/>
<dbReference type="GeneID" id="69530750"/>
<dbReference type="KEGG" id="btk:BT9727_3633"/>
<dbReference type="PATRIC" id="fig|281309.8.peg.3871"/>
<dbReference type="HOGENOM" id="CLU_094234_2_1_9"/>
<dbReference type="PRO" id="PR:Q6HES3"/>
<dbReference type="Proteomes" id="UP000001301">
    <property type="component" value="Chromosome"/>
</dbReference>
<dbReference type="GO" id="GO:0003723">
    <property type="term" value="F:RNA binding"/>
    <property type="evidence" value="ECO:0007669"/>
    <property type="project" value="UniProtKB-UniRule"/>
</dbReference>
<dbReference type="GO" id="GO:0004845">
    <property type="term" value="F:uracil phosphoribosyltransferase activity"/>
    <property type="evidence" value="ECO:0007669"/>
    <property type="project" value="UniProtKB-UniRule"/>
</dbReference>
<dbReference type="GO" id="GO:0006353">
    <property type="term" value="P:DNA-templated transcription termination"/>
    <property type="evidence" value="ECO:0007669"/>
    <property type="project" value="UniProtKB-UniRule"/>
</dbReference>
<dbReference type="CDD" id="cd06223">
    <property type="entry name" value="PRTases_typeI"/>
    <property type="match status" value="1"/>
</dbReference>
<dbReference type="FunFam" id="3.40.50.2020:FF:000020">
    <property type="entry name" value="Bifunctional protein PyrR"/>
    <property type="match status" value="1"/>
</dbReference>
<dbReference type="Gene3D" id="3.40.50.2020">
    <property type="match status" value="1"/>
</dbReference>
<dbReference type="HAMAP" id="MF_01219">
    <property type="entry name" value="PyrR"/>
    <property type="match status" value="1"/>
</dbReference>
<dbReference type="InterPro" id="IPR000836">
    <property type="entry name" value="PRibTrfase_dom"/>
</dbReference>
<dbReference type="InterPro" id="IPR029057">
    <property type="entry name" value="PRTase-like"/>
</dbReference>
<dbReference type="InterPro" id="IPR023050">
    <property type="entry name" value="PyrR"/>
</dbReference>
<dbReference type="InterPro" id="IPR050137">
    <property type="entry name" value="PyrR_bifunctional"/>
</dbReference>
<dbReference type="NCBIfam" id="NF003545">
    <property type="entry name" value="PRK05205.1-1"/>
    <property type="match status" value="1"/>
</dbReference>
<dbReference type="NCBIfam" id="NF003547">
    <property type="entry name" value="PRK05205.1-3"/>
    <property type="match status" value="1"/>
</dbReference>
<dbReference type="NCBIfam" id="NF003548">
    <property type="entry name" value="PRK05205.1-4"/>
    <property type="match status" value="1"/>
</dbReference>
<dbReference type="NCBIfam" id="NF003549">
    <property type="entry name" value="PRK05205.1-5"/>
    <property type="match status" value="1"/>
</dbReference>
<dbReference type="PANTHER" id="PTHR11608">
    <property type="entry name" value="BIFUNCTIONAL PROTEIN PYRR"/>
    <property type="match status" value="1"/>
</dbReference>
<dbReference type="PANTHER" id="PTHR11608:SF0">
    <property type="entry name" value="BIFUNCTIONAL PROTEIN PYRR"/>
    <property type="match status" value="1"/>
</dbReference>
<dbReference type="Pfam" id="PF00156">
    <property type="entry name" value="Pribosyltran"/>
    <property type="match status" value="1"/>
</dbReference>
<dbReference type="SUPFAM" id="SSF53271">
    <property type="entry name" value="PRTase-like"/>
    <property type="match status" value="1"/>
</dbReference>
<accession>Q6HES3</accession>
<organism>
    <name type="scientific">Bacillus thuringiensis subsp. konkukian (strain 97-27)</name>
    <dbReference type="NCBI Taxonomy" id="281309"/>
    <lineage>
        <taxon>Bacteria</taxon>
        <taxon>Bacillati</taxon>
        <taxon>Bacillota</taxon>
        <taxon>Bacilli</taxon>
        <taxon>Bacillales</taxon>
        <taxon>Bacillaceae</taxon>
        <taxon>Bacillus</taxon>
        <taxon>Bacillus cereus group</taxon>
    </lineage>
</organism>
<proteinExistence type="inferred from homology"/>